<comment type="function">
    <text evidence="1">Involved in protein export. Acts as a chaperone by maintaining the newly synthesized protein in an open conformation. Functions as a peptidyl-prolyl cis-trans isomerase.</text>
</comment>
<comment type="catalytic activity">
    <reaction evidence="1">
        <text>[protein]-peptidylproline (omega=180) = [protein]-peptidylproline (omega=0)</text>
        <dbReference type="Rhea" id="RHEA:16237"/>
        <dbReference type="Rhea" id="RHEA-COMP:10747"/>
        <dbReference type="Rhea" id="RHEA-COMP:10748"/>
        <dbReference type="ChEBI" id="CHEBI:83833"/>
        <dbReference type="ChEBI" id="CHEBI:83834"/>
        <dbReference type="EC" id="5.2.1.8"/>
    </reaction>
</comment>
<comment type="subcellular location">
    <subcellularLocation>
        <location>Cytoplasm</location>
    </subcellularLocation>
    <text evidence="1">About half TF is bound to the ribosome near the polypeptide exit tunnel while the other half is free in the cytoplasm.</text>
</comment>
<comment type="domain">
    <text evidence="1">Consists of 3 domains; the N-terminus binds the ribosome, the middle domain has PPIase activity, while the C-terminus has intrinsic chaperone activity on its own.</text>
</comment>
<comment type="similarity">
    <text evidence="1">Belongs to the FKBP-type PPIase family. Tig subfamily.</text>
</comment>
<keyword id="KW-0131">Cell cycle</keyword>
<keyword id="KW-0132">Cell division</keyword>
<keyword id="KW-0143">Chaperone</keyword>
<keyword id="KW-0963">Cytoplasm</keyword>
<keyword id="KW-0413">Isomerase</keyword>
<keyword id="KW-0697">Rotamase</keyword>
<feature type="chain" id="PRO_1000079045" description="Trigger factor">
    <location>
        <begin position="1"/>
        <end position="441"/>
    </location>
</feature>
<feature type="domain" description="PPIase FKBP-type" evidence="1">
    <location>
        <begin position="161"/>
        <end position="246"/>
    </location>
</feature>
<organism>
    <name type="scientific">Marinomonas sp. (strain MWYL1)</name>
    <dbReference type="NCBI Taxonomy" id="400668"/>
    <lineage>
        <taxon>Bacteria</taxon>
        <taxon>Pseudomonadati</taxon>
        <taxon>Pseudomonadota</taxon>
        <taxon>Gammaproteobacteria</taxon>
        <taxon>Oceanospirillales</taxon>
        <taxon>Oceanospirillaceae</taxon>
        <taxon>Marinomonas</taxon>
    </lineage>
</organism>
<accession>A6VW19</accession>
<protein>
    <recommendedName>
        <fullName evidence="1">Trigger factor</fullName>
        <shortName evidence="1">TF</shortName>
        <ecNumber evidence="1">5.2.1.8</ecNumber>
    </recommendedName>
    <alternativeName>
        <fullName evidence="1">PPIase</fullName>
    </alternativeName>
</protein>
<sequence length="441" mass="48444">MQVSVETTSPIERVLTISVPAARVDEKVNSEVAKTAKTIRIDGFRKGKVPVSVVKKRYGQGIRLDAVEQIMRDAYVEAIQKESIQPAGMPSIEPKNFAEGADLEFVVKIEVYPEVTLADNSAIKVDRVVSDVTEADVDTMLETLRKQNAEWSAVERESADGDQVTIDFVGYLGDEAFDGGAAEGHKLVLGSNTMIPGFESGILGAKAGEERTISVTFPEDYQAENLKGKEATFKITVSEVAEQILPELNDAFVEKFGLEEATVAALRAEVRKNMERELNQAIKSKLKNALFEGLSSINEVEVPSALVDQEVDALRKQAAQQFGGQGFDASQLPAELFQEEAKKRAKLGLLISEVIKKDDLKVDDDRVRAFLEDMAQAYQEPQQVIDFYLKNKEQLAQVQSAVLEEQVVDKLLESAQVTEVTLGYEDAIKPNAQAEEAGEEA</sequence>
<reference key="1">
    <citation type="submission" date="2007-06" db="EMBL/GenBank/DDBJ databases">
        <title>Complete sequence of Marinomonas sp. MWYL1.</title>
        <authorList>
            <consortium name="US DOE Joint Genome Institute"/>
            <person name="Copeland A."/>
            <person name="Lucas S."/>
            <person name="Lapidus A."/>
            <person name="Barry K."/>
            <person name="Glavina del Rio T."/>
            <person name="Dalin E."/>
            <person name="Tice H."/>
            <person name="Pitluck S."/>
            <person name="Kiss H."/>
            <person name="Brettin T."/>
            <person name="Bruce D."/>
            <person name="Detter J.C."/>
            <person name="Han C."/>
            <person name="Schmutz J."/>
            <person name="Larimer F."/>
            <person name="Land M."/>
            <person name="Hauser L."/>
            <person name="Kyrpides N."/>
            <person name="Kim E."/>
            <person name="Johnston A.W.B."/>
            <person name="Todd J.D."/>
            <person name="Rogers R."/>
            <person name="Wexler M."/>
            <person name="Bond P.L."/>
            <person name="Li Y."/>
            <person name="Richardson P."/>
        </authorList>
    </citation>
    <scope>NUCLEOTIDE SEQUENCE [LARGE SCALE GENOMIC DNA]</scope>
    <source>
        <strain>MWYL1</strain>
    </source>
</reference>
<proteinExistence type="inferred from homology"/>
<dbReference type="EC" id="5.2.1.8" evidence="1"/>
<dbReference type="EMBL" id="CP000749">
    <property type="protein sequence ID" value="ABR70648.1"/>
    <property type="molecule type" value="Genomic_DNA"/>
</dbReference>
<dbReference type="SMR" id="A6VW19"/>
<dbReference type="STRING" id="400668.Mmwyl1_1722"/>
<dbReference type="KEGG" id="mmw:Mmwyl1_1722"/>
<dbReference type="eggNOG" id="COG0544">
    <property type="taxonomic scope" value="Bacteria"/>
</dbReference>
<dbReference type="HOGENOM" id="CLU_033058_2_0_6"/>
<dbReference type="OrthoDB" id="9767721at2"/>
<dbReference type="GO" id="GO:0005737">
    <property type="term" value="C:cytoplasm"/>
    <property type="evidence" value="ECO:0007669"/>
    <property type="project" value="UniProtKB-SubCell"/>
</dbReference>
<dbReference type="GO" id="GO:0003755">
    <property type="term" value="F:peptidyl-prolyl cis-trans isomerase activity"/>
    <property type="evidence" value="ECO:0007669"/>
    <property type="project" value="UniProtKB-UniRule"/>
</dbReference>
<dbReference type="GO" id="GO:0044183">
    <property type="term" value="F:protein folding chaperone"/>
    <property type="evidence" value="ECO:0007669"/>
    <property type="project" value="TreeGrafter"/>
</dbReference>
<dbReference type="GO" id="GO:0043022">
    <property type="term" value="F:ribosome binding"/>
    <property type="evidence" value="ECO:0007669"/>
    <property type="project" value="TreeGrafter"/>
</dbReference>
<dbReference type="GO" id="GO:0051083">
    <property type="term" value="P:'de novo' cotranslational protein folding"/>
    <property type="evidence" value="ECO:0007669"/>
    <property type="project" value="TreeGrafter"/>
</dbReference>
<dbReference type="GO" id="GO:0051301">
    <property type="term" value="P:cell division"/>
    <property type="evidence" value="ECO:0007669"/>
    <property type="project" value="UniProtKB-KW"/>
</dbReference>
<dbReference type="GO" id="GO:0061077">
    <property type="term" value="P:chaperone-mediated protein folding"/>
    <property type="evidence" value="ECO:0007669"/>
    <property type="project" value="TreeGrafter"/>
</dbReference>
<dbReference type="GO" id="GO:0015031">
    <property type="term" value="P:protein transport"/>
    <property type="evidence" value="ECO:0007669"/>
    <property type="project" value="UniProtKB-UniRule"/>
</dbReference>
<dbReference type="GO" id="GO:0043335">
    <property type="term" value="P:protein unfolding"/>
    <property type="evidence" value="ECO:0007669"/>
    <property type="project" value="TreeGrafter"/>
</dbReference>
<dbReference type="FunFam" id="3.10.50.40:FF:000001">
    <property type="entry name" value="Trigger factor"/>
    <property type="match status" value="1"/>
</dbReference>
<dbReference type="Gene3D" id="3.10.50.40">
    <property type="match status" value="1"/>
</dbReference>
<dbReference type="Gene3D" id="3.30.70.1050">
    <property type="entry name" value="Trigger factor ribosome-binding domain"/>
    <property type="match status" value="1"/>
</dbReference>
<dbReference type="Gene3D" id="1.10.3120.10">
    <property type="entry name" value="Trigger factor, C-terminal domain"/>
    <property type="match status" value="1"/>
</dbReference>
<dbReference type="HAMAP" id="MF_00303">
    <property type="entry name" value="Trigger_factor_Tig"/>
    <property type="match status" value="1"/>
</dbReference>
<dbReference type="InterPro" id="IPR046357">
    <property type="entry name" value="PPIase_dom_sf"/>
</dbReference>
<dbReference type="InterPro" id="IPR001179">
    <property type="entry name" value="PPIase_FKBP_dom"/>
</dbReference>
<dbReference type="InterPro" id="IPR005215">
    <property type="entry name" value="Trig_fac"/>
</dbReference>
<dbReference type="InterPro" id="IPR008880">
    <property type="entry name" value="Trigger_fac_C"/>
</dbReference>
<dbReference type="InterPro" id="IPR037041">
    <property type="entry name" value="Trigger_fac_C_sf"/>
</dbReference>
<dbReference type="InterPro" id="IPR008881">
    <property type="entry name" value="Trigger_fac_ribosome-bd_bac"/>
</dbReference>
<dbReference type="InterPro" id="IPR036611">
    <property type="entry name" value="Trigger_fac_ribosome-bd_sf"/>
</dbReference>
<dbReference type="InterPro" id="IPR027304">
    <property type="entry name" value="Trigger_fact/SurA_dom_sf"/>
</dbReference>
<dbReference type="NCBIfam" id="TIGR00115">
    <property type="entry name" value="tig"/>
    <property type="match status" value="1"/>
</dbReference>
<dbReference type="PANTHER" id="PTHR30560">
    <property type="entry name" value="TRIGGER FACTOR CHAPERONE AND PEPTIDYL-PROLYL CIS/TRANS ISOMERASE"/>
    <property type="match status" value="1"/>
</dbReference>
<dbReference type="PANTHER" id="PTHR30560:SF3">
    <property type="entry name" value="TRIGGER FACTOR-LIKE PROTEIN TIG, CHLOROPLASTIC"/>
    <property type="match status" value="1"/>
</dbReference>
<dbReference type="Pfam" id="PF00254">
    <property type="entry name" value="FKBP_C"/>
    <property type="match status" value="1"/>
</dbReference>
<dbReference type="Pfam" id="PF05698">
    <property type="entry name" value="Trigger_C"/>
    <property type="match status" value="1"/>
</dbReference>
<dbReference type="Pfam" id="PF05697">
    <property type="entry name" value="Trigger_N"/>
    <property type="match status" value="1"/>
</dbReference>
<dbReference type="PIRSF" id="PIRSF003095">
    <property type="entry name" value="Trigger_factor"/>
    <property type="match status" value="1"/>
</dbReference>
<dbReference type="SUPFAM" id="SSF54534">
    <property type="entry name" value="FKBP-like"/>
    <property type="match status" value="1"/>
</dbReference>
<dbReference type="SUPFAM" id="SSF109998">
    <property type="entry name" value="Triger factor/SurA peptide-binding domain-like"/>
    <property type="match status" value="1"/>
</dbReference>
<dbReference type="SUPFAM" id="SSF102735">
    <property type="entry name" value="Trigger factor ribosome-binding domain"/>
    <property type="match status" value="1"/>
</dbReference>
<dbReference type="PROSITE" id="PS50059">
    <property type="entry name" value="FKBP_PPIASE"/>
    <property type="match status" value="1"/>
</dbReference>
<name>TIG_MARMS</name>
<gene>
    <name evidence="1" type="primary">tig</name>
    <name type="ordered locus">Mmwyl1_1722</name>
</gene>
<evidence type="ECO:0000255" key="1">
    <source>
        <dbReference type="HAMAP-Rule" id="MF_00303"/>
    </source>
</evidence>